<feature type="chain" id="PRO_0000161034" description="Histidine ammonia-lyase">
    <location>
        <begin position="1"/>
        <end position="504"/>
    </location>
</feature>
<feature type="modified residue" description="2,3-didehydroalanine (Ser)" evidence="1">
    <location>
        <position position="143"/>
    </location>
</feature>
<feature type="cross-link" description="5-imidazolinone (Ala-Gly)" evidence="1">
    <location>
        <begin position="142"/>
        <end position="144"/>
    </location>
</feature>
<reference key="1">
    <citation type="journal article" date="2002" name="Lancet">
        <title>Genome and virulence determinants of high virulence community-acquired MRSA.</title>
        <authorList>
            <person name="Baba T."/>
            <person name="Takeuchi F."/>
            <person name="Kuroda M."/>
            <person name="Yuzawa H."/>
            <person name="Aoki K."/>
            <person name="Oguchi A."/>
            <person name="Nagai Y."/>
            <person name="Iwama N."/>
            <person name="Asano K."/>
            <person name="Naimi T."/>
            <person name="Kuroda H."/>
            <person name="Cui L."/>
            <person name="Yamamoto K."/>
            <person name="Hiramatsu K."/>
        </authorList>
    </citation>
    <scope>NUCLEOTIDE SEQUENCE [LARGE SCALE GENOMIC DNA]</scope>
    <source>
        <strain>MW2</strain>
    </source>
</reference>
<organism>
    <name type="scientific">Staphylococcus aureus (strain MW2)</name>
    <dbReference type="NCBI Taxonomy" id="196620"/>
    <lineage>
        <taxon>Bacteria</taxon>
        <taxon>Bacillati</taxon>
        <taxon>Bacillota</taxon>
        <taxon>Bacilli</taxon>
        <taxon>Bacillales</taxon>
        <taxon>Staphylococcaceae</taxon>
        <taxon>Staphylococcus</taxon>
    </lineage>
</organism>
<sequence>MTLYLDGETLTIEDIKSFLQQQSKIEIIDDALERVKKSRAVVERIIENEETVYGITTGFGLFSDVRIDPTQYNELQVNLIRSHACGLGEPFSKEVALVMMILRLNTLLKGHSGATLELVRQLQFFINERIIPIIPQQGSLGASGDLAPLSHLALALIGEGKVLYRGEEKDSDDVLRELNRQPLNLQAKEGLALINGTQAMTAQGVISYIESEDLGYQSEWIAALTHQSLNGIIDAYRHDVHAVRNFQEQINVAARMRDWLEGSTLTTRQAEIRVQDAYTLRCIPQIHGASFQVFNYVKQQLEFEMNAANDNPLIFEEANETFVISGGNFHGQPIAFALDHLKLGVSELANVSERRLERLVNPQLNGDLPAFLSPEPGLQSGAMIMQYAAASLVSENKTLAHPASVDSITSSANQEDHVSMGTTAARHGYQIIENARRVLAIECVIALQAAELKGVEGLSPKTRRKYEEFRSIVPSITHDRQFHKDIEAVAQYLKQSIYQTTACH</sequence>
<accession>Q8NYY3</accession>
<dbReference type="EC" id="4.3.1.3" evidence="1"/>
<dbReference type="EMBL" id="BA000033">
    <property type="protein sequence ID" value="BAB93873.1"/>
    <property type="molecule type" value="Genomic_DNA"/>
</dbReference>
<dbReference type="RefSeq" id="WP_000177468.1">
    <property type="nucleotide sequence ID" value="NC_003923.1"/>
</dbReference>
<dbReference type="SMR" id="Q8NYY3"/>
<dbReference type="KEGG" id="sam:MW0008"/>
<dbReference type="HOGENOM" id="CLU_014801_4_0_9"/>
<dbReference type="UniPathway" id="UPA00379">
    <property type="reaction ID" value="UER00549"/>
</dbReference>
<dbReference type="GO" id="GO:0005737">
    <property type="term" value="C:cytoplasm"/>
    <property type="evidence" value="ECO:0007669"/>
    <property type="project" value="UniProtKB-SubCell"/>
</dbReference>
<dbReference type="GO" id="GO:0004397">
    <property type="term" value="F:histidine ammonia-lyase activity"/>
    <property type="evidence" value="ECO:0007669"/>
    <property type="project" value="UniProtKB-UniRule"/>
</dbReference>
<dbReference type="GO" id="GO:0019556">
    <property type="term" value="P:L-histidine catabolic process to glutamate and formamide"/>
    <property type="evidence" value="ECO:0007669"/>
    <property type="project" value="UniProtKB-UniPathway"/>
</dbReference>
<dbReference type="GO" id="GO:0019557">
    <property type="term" value="P:L-histidine catabolic process to glutamate and formate"/>
    <property type="evidence" value="ECO:0007669"/>
    <property type="project" value="UniProtKB-UniPathway"/>
</dbReference>
<dbReference type="CDD" id="cd00332">
    <property type="entry name" value="PAL-HAL"/>
    <property type="match status" value="1"/>
</dbReference>
<dbReference type="FunFam" id="1.10.275.10:FF:000008">
    <property type="entry name" value="Histidine ammonia-lyase"/>
    <property type="match status" value="1"/>
</dbReference>
<dbReference type="FunFam" id="1.20.200.10:FF:000003">
    <property type="entry name" value="Histidine ammonia-lyase"/>
    <property type="match status" value="1"/>
</dbReference>
<dbReference type="Gene3D" id="1.20.200.10">
    <property type="entry name" value="Fumarase/aspartase (Central domain)"/>
    <property type="match status" value="1"/>
</dbReference>
<dbReference type="Gene3D" id="1.10.275.10">
    <property type="entry name" value="Fumarase/aspartase (N-terminal domain)"/>
    <property type="match status" value="1"/>
</dbReference>
<dbReference type="HAMAP" id="MF_00229">
    <property type="entry name" value="His_ammonia_lyase"/>
    <property type="match status" value="1"/>
</dbReference>
<dbReference type="InterPro" id="IPR001106">
    <property type="entry name" value="Aromatic_Lyase"/>
</dbReference>
<dbReference type="InterPro" id="IPR024083">
    <property type="entry name" value="Fumarase/histidase_N"/>
</dbReference>
<dbReference type="InterPro" id="IPR005921">
    <property type="entry name" value="HutH"/>
</dbReference>
<dbReference type="InterPro" id="IPR008948">
    <property type="entry name" value="L-Aspartase-like"/>
</dbReference>
<dbReference type="InterPro" id="IPR022313">
    <property type="entry name" value="Phe/His_NH3-lyase_AS"/>
</dbReference>
<dbReference type="NCBIfam" id="TIGR01225">
    <property type="entry name" value="hutH"/>
    <property type="match status" value="1"/>
</dbReference>
<dbReference type="NCBIfam" id="NF006871">
    <property type="entry name" value="PRK09367.1"/>
    <property type="match status" value="1"/>
</dbReference>
<dbReference type="PANTHER" id="PTHR10362">
    <property type="entry name" value="HISTIDINE AMMONIA-LYASE"/>
    <property type="match status" value="1"/>
</dbReference>
<dbReference type="Pfam" id="PF00221">
    <property type="entry name" value="Lyase_aromatic"/>
    <property type="match status" value="1"/>
</dbReference>
<dbReference type="SUPFAM" id="SSF48557">
    <property type="entry name" value="L-aspartase-like"/>
    <property type="match status" value="1"/>
</dbReference>
<dbReference type="PROSITE" id="PS00488">
    <property type="entry name" value="PAL_HISTIDASE"/>
    <property type="match status" value="1"/>
</dbReference>
<evidence type="ECO:0000255" key="1">
    <source>
        <dbReference type="HAMAP-Rule" id="MF_00229"/>
    </source>
</evidence>
<comment type="catalytic activity">
    <reaction evidence="1">
        <text>L-histidine = trans-urocanate + NH4(+)</text>
        <dbReference type="Rhea" id="RHEA:21232"/>
        <dbReference type="ChEBI" id="CHEBI:17771"/>
        <dbReference type="ChEBI" id="CHEBI:28938"/>
        <dbReference type="ChEBI" id="CHEBI:57595"/>
        <dbReference type="EC" id="4.3.1.3"/>
    </reaction>
</comment>
<comment type="pathway">
    <text evidence="1">Amino-acid degradation; L-histidine degradation into L-glutamate; N-formimidoyl-L-glutamate from L-histidine: step 1/3.</text>
</comment>
<comment type="subcellular location">
    <subcellularLocation>
        <location evidence="1">Cytoplasm</location>
    </subcellularLocation>
</comment>
<comment type="PTM">
    <text evidence="1">Contains an active site 4-methylidene-imidazol-5-one (MIO), which is formed autocatalytically by cyclization and dehydration of residues Ala-Ser-Gly.</text>
</comment>
<comment type="similarity">
    <text evidence="1">Belongs to the PAL/histidase family.</text>
</comment>
<protein>
    <recommendedName>
        <fullName evidence="1">Histidine ammonia-lyase</fullName>
        <shortName evidence="1">Histidase</shortName>
        <ecNumber evidence="1">4.3.1.3</ecNumber>
    </recommendedName>
</protein>
<proteinExistence type="inferred from homology"/>
<keyword id="KW-0963">Cytoplasm</keyword>
<keyword id="KW-0369">Histidine metabolism</keyword>
<keyword id="KW-0456">Lyase</keyword>
<name>HUTH_STAAW</name>
<gene>
    <name evidence="1" type="primary">hutH</name>
    <name type="ordered locus">MW0008</name>
</gene>